<feature type="chain" id="PRO_0000328989" description="Transmembrane protein 179B">
    <location>
        <begin position="1"/>
        <end position="219"/>
    </location>
</feature>
<feature type="transmembrane region" description="Helical" evidence="1">
    <location>
        <begin position="6"/>
        <end position="26"/>
    </location>
</feature>
<feature type="transmembrane region" description="Helical" evidence="1">
    <location>
        <begin position="69"/>
        <end position="89"/>
    </location>
</feature>
<feature type="transmembrane region" description="Helical" evidence="1">
    <location>
        <begin position="105"/>
        <end position="125"/>
    </location>
</feature>
<feature type="transmembrane region" description="Helical" evidence="1">
    <location>
        <begin position="167"/>
        <end position="187"/>
    </location>
</feature>
<feature type="region of interest" description="Disordered" evidence="2">
    <location>
        <begin position="195"/>
        <end position="219"/>
    </location>
</feature>
<protein>
    <recommendedName>
        <fullName>Transmembrane protein 179B</fullName>
    </recommendedName>
</protein>
<reference key="1">
    <citation type="submission" date="2005-05" db="EMBL/GenBank/DDBJ databases">
        <authorList>
            <consortium name="NIH - Zebrafish Gene Collection (ZGC) project"/>
        </authorList>
    </citation>
    <scope>NUCLEOTIDE SEQUENCE [LARGE SCALE MRNA]</scope>
    <source>
        <tissue>Embryo</tissue>
        <tissue>Kidney</tissue>
    </source>
</reference>
<accession>Q7T392</accession>
<accession>Q503H7</accession>
<keyword id="KW-0472">Membrane</keyword>
<keyword id="KW-1185">Reference proteome</keyword>
<keyword id="KW-0812">Transmembrane</keyword>
<keyword id="KW-1133">Transmembrane helix</keyword>
<sequence length="219" mass="24546">MALPRPLLLELLLYGSCFICGIITAASVTISQGSFDGKCMLYGSVRLNSSTIDVLSFSSLSLCYFVSAISVCVAVFCFSLTLYWIYIAFVDGEIKREKLWMNVTLGLSGVFLFFLLVTGCILKIGRDRLCDSLLHTVSNITRCEEAQNKSWRSPINASQFYTRLHSAETAVWVNFFFWMIIVVLVLIQRHKGSEIRPGTEDPSAPPSETEPFFNRPGRP</sequence>
<name>T179B_DANRE</name>
<proteinExistence type="evidence at transcript level"/>
<gene>
    <name type="primary">tmem179b</name>
    <name type="ORF">zgc:110591</name>
</gene>
<evidence type="ECO:0000255" key="1"/>
<evidence type="ECO:0000256" key="2">
    <source>
        <dbReference type="SAM" id="MobiDB-lite"/>
    </source>
</evidence>
<evidence type="ECO:0000305" key="3"/>
<comment type="subcellular location">
    <subcellularLocation>
        <location evidence="3">Membrane</location>
        <topology evidence="3">Multi-pass membrane protein</topology>
    </subcellularLocation>
</comment>
<comment type="similarity">
    <text evidence="3">Belongs to the TMEM179 family.</text>
</comment>
<comment type="sequence caution" evidence="3">
    <conflict type="erroneous initiation">
        <sequence resource="EMBL-CDS" id="AAH53207"/>
    </conflict>
</comment>
<organism>
    <name type="scientific">Danio rerio</name>
    <name type="common">Zebrafish</name>
    <name type="synonym">Brachydanio rerio</name>
    <dbReference type="NCBI Taxonomy" id="7955"/>
    <lineage>
        <taxon>Eukaryota</taxon>
        <taxon>Metazoa</taxon>
        <taxon>Chordata</taxon>
        <taxon>Craniata</taxon>
        <taxon>Vertebrata</taxon>
        <taxon>Euteleostomi</taxon>
        <taxon>Actinopterygii</taxon>
        <taxon>Neopterygii</taxon>
        <taxon>Teleostei</taxon>
        <taxon>Ostariophysi</taxon>
        <taxon>Cypriniformes</taxon>
        <taxon>Danionidae</taxon>
        <taxon>Danioninae</taxon>
        <taxon>Danio</taxon>
    </lineage>
</organism>
<dbReference type="EMBL" id="BC053207">
    <property type="protein sequence ID" value="AAH53207.1"/>
    <property type="status" value="ALT_INIT"/>
    <property type="molecule type" value="mRNA"/>
</dbReference>
<dbReference type="EMBL" id="BC095324">
    <property type="protein sequence ID" value="AAH95324.1"/>
    <property type="molecule type" value="mRNA"/>
</dbReference>
<dbReference type="RefSeq" id="NP_001018325.1">
    <property type="nucleotide sequence ID" value="NM_001020489.2"/>
</dbReference>
<dbReference type="FunCoup" id="Q7T392">
    <property type="interactions" value="2219"/>
</dbReference>
<dbReference type="STRING" id="7955.ENSDARP00000073155"/>
<dbReference type="PaxDb" id="7955-ENSDARP00000073155"/>
<dbReference type="Ensembl" id="ENSDART00000078694">
    <property type="protein sequence ID" value="ENSDARP00000073155"/>
    <property type="gene ID" value="ENSDARG00000056233"/>
</dbReference>
<dbReference type="Ensembl" id="ENSDART00000176870">
    <property type="protein sequence ID" value="ENSDARP00000144423"/>
    <property type="gene ID" value="ENSDARG00000116695"/>
</dbReference>
<dbReference type="GeneID" id="402849"/>
<dbReference type="KEGG" id="dre:402849"/>
<dbReference type="AGR" id="ZFIN:ZDB-GENE-050522-510"/>
<dbReference type="CTD" id="402849"/>
<dbReference type="ZFIN" id="ZDB-GENE-050522-510">
    <property type="gene designation" value="tmem179ba"/>
</dbReference>
<dbReference type="eggNOG" id="ENOG502S28I">
    <property type="taxonomic scope" value="Eukaryota"/>
</dbReference>
<dbReference type="HOGENOM" id="CLU_109636_0_0_1"/>
<dbReference type="InParanoid" id="Q7T392"/>
<dbReference type="OMA" id="YWVYTFC"/>
<dbReference type="OrthoDB" id="8914435at2759"/>
<dbReference type="PhylomeDB" id="Q7T392"/>
<dbReference type="TreeFam" id="TF324841"/>
<dbReference type="Reactome" id="R-DRE-6798695">
    <property type="pathway name" value="Neutrophil degranulation"/>
</dbReference>
<dbReference type="PRO" id="PR:Q7T392"/>
<dbReference type="Proteomes" id="UP000000437">
    <property type="component" value="Alternate scaffold 7"/>
</dbReference>
<dbReference type="Proteomes" id="UP000000437">
    <property type="component" value="Chromosome 7"/>
</dbReference>
<dbReference type="Bgee" id="ENSDARG00000056233">
    <property type="expression patterns" value="Expressed in granulocyte and 25 other cell types or tissues"/>
</dbReference>
<dbReference type="ExpressionAtlas" id="Q7T392">
    <property type="expression patterns" value="baseline and differential"/>
</dbReference>
<dbReference type="GO" id="GO:0016020">
    <property type="term" value="C:membrane"/>
    <property type="evidence" value="ECO:0007669"/>
    <property type="project" value="UniProtKB-SubCell"/>
</dbReference>
<dbReference type="InterPro" id="IPR029776">
    <property type="entry name" value="TMEM179B"/>
</dbReference>
<dbReference type="PANTHER" id="PTHR31056">
    <property type="entry name" value="TRANSMEMBRANE PROTEIN 179B"/>
    <property type="match status" value="1"/>
</dbReference>
<dbReference type="PANTHER" id="PTHR31056:SF1">
    <property type="entry name" value="TRANSMEMBRANE PROTEIN 179B"/>
    <property type="match status" value="1"/>
</dbReference>